<name>GNAI1_RAT</name>
<organism>
    <name type="scientific">Rattus norvegicus</name>
    <name type="common">Rat</name>
    <dbReference type="NCBI Taxonomy" id="10116"/>
    <lineage>
        <taxon>Eukaryota</taxon>
        <taxon>Metazoa</taxon>
        <taxon>Chordata</taxon>
        <taxon>Craniata</taxon>
        <taxon>Vertebrata</taxon>
        <taxon>Euteleostomi</taxon>
        <taxon>Mammalia</taxon>
        <taxon>Eutheria</taxon>
        <taxon>Euarchontoglires</taxon>
        <taxon>Glires</taxon>
        <taxon>Rodentia</taxon>
        <taxon>Myomorpha</taxon>
        <taxon>Muroidea</taxon>
        <taxon>Muridae</taxon>
        <taxon>Murinae</taxon>
        <taxon>Rattus</taxon>
    </lineage>
</organism>
<feature type="initiator methionine" description="Removed" evidence="13">
    <location>
        <position position="1"/>
    </location>
</feature>
<feature type="chain" id="PRO_0000203673" description="Guanine nucleotide-binding protein G(i) subunit alpha-1">
    <location>
        <begin position="2"/>
        <end position="354"/>
    </location>
</feature>
<feature type="domain" description="G-alpha" evidence="2">
    <location>
        <begin position="32"/>
        <end position="354"/>
    </location>
</feature>
<feature type="region of interest" description="G1 motif" evidence="2">
    <location>
        <begin position="35"/>
        <end position="48"/>
    </location>
</feature>
<feature type="region of interest" description="G2 motif" evidence="2">
    <location>
        <begin position="173"/>
        <end position="181"/>
    </location>
</feature>
<feature type="region of interest" description="G3 motif" evidence="2">
    <location>
        <begin position="196"/>
        <end position="205"/>
    </location>
</feature>
<feature type="region of interest" description="G4 motif" evidence="2">
    <location>
        <begin position="265"/>
        <end position="272"/>
    </location>
</feature>
<feature type="region of interest" description="G5 motif" evidence="2">
    <location>
        <begin position="324"/>
        <end position="329"/>
    </location>
</feature>
<feature type="binding site" evidence="21 22 23 24 25 26 27 28">
    <location>
        <begin position="43"/>
        <end position="48"/>
    </location>
    <ligand>
        <name>GTP</name>
        <dbReference type="ChEBI" id="CHEBI:37565"/>
    </ligand>
</feature>
<feature type="binding site" evidence="12 17 22 27">
    <location>
        <position position="47"/>
    </location>
    <ligand>
        <name>Mg(2+)</name>
        <dbReference type="ChEBI" id="CHEBI:18420"/>
    </ligand>
</feature>
<feature type="binding site" evidence="21 22 24 26">
    <location>
        <begin position="150"/>
        <end position="151"/>
    </location>
    <ligand>
        <name>GTP</name>
        <dbReference type="ChEBI" id="CHEBI:37565"/>
    </ligand>
</feature>
<feature type="binding site" evidence="21 22 23 24 25 26 27 28">
    <location>
        <begin position="175"/>
        <end position="178"/>
    </location>
    <ligand>
        <name>GTP</name>
        <dbReference type="ChEBI" id="CHEBI:37565"/>
    </ligand>
</feature>
<feature type="binding site" evidence="8 12 17 22 27">
    <location>
        <position position="181"/>
    </location>
    <ligand>
        <name>Mg(2+)</name>
        <dbReference type="ChEBI" id="CHEBI:18420"/>
    </ligand>
</feature>
<feature type="binding site" evidence="21 22 23 24 25 26 27 28">
    <location>
        <begin position="200"/>
        <end position="204"/>
    </location>
    <ligand>
        <name>GTP</name>
        <dbReference type="ChEBI" id="CHEBI:37565"/>
    </ligand>
</feature>
<feature type="binding site" evidence="21 22 23 24 25 26 27 28">
    <location>
        <begin position="269"/>
        <end position="272"/>
    </location>
    <ligand>
        <name>GTP</name>
        <dbReference type="ChEBI" id="CHEBI:37565"/>
    </ligand>
</feature>
<feature type="binding site" evidence="21 23 24 25 26 27 28">
    <location>
        <position position="326"/>
    </location>
    <ligand>
        <name>GTP</name>
        <dbReference type="ChEBI" id="CHEBI:37565"/>
    </ligand>
</feature>
<feature type="lipid moiety-binding region" description="N-myristoyl glycine" evidence="13">
    <location>
        <position position="2"/>
    </location>
</feature>
<feature type="lipid moiety-binding region" description="S-palmitoyl cysteine" evidence="13">
    <location>
        <position position="3"/>
    </location>
</feature>
<feature type="mutagenesis site" description="Abolishes myristoylation and palmitoylation." evidence="13">
    <original>G</original>
    <variation>A</variation>
    <location>
        <position position="2"/>
    </location>
</feature>
<feature type="mutagenesis site" description="Abolishes palmitoylation." evidence="13">
    <original>C</original>
    <variation>S</variation>
    <location>
        <position position="3"/>
    </location>
</feature>
<feature type="mutagenesis site" description="Mildly impairs receptor binding; mildly decreases basal and receptor-stimulated GDP exchange." evidence="11">
    <original>E</original>
    <variation>A</variation>
    <location>
        <position position="43"/>
    </location>
</feature>
<feature type="mutagenesis site" description="Inhibits interaction with RGS14. Does not inhibit interaction with RIC8A." evidence="9">
    <original>N</original>
    <variation>I</variation>
    <location>
        <position position="149"/>
    </location>
</feature>
<feature type="mutagenesis site" description="Increases basal GDP exchange rate; no effect on receptor-stimulated GDP exchange." evidence="12">
    <original>F</original>
    <variation>Y</variation>
    <location>
        <position position="189"/>
    </location>
</feature>
<feature type="mutagenesis site" description="No effect on basal GDP exchange rate; mildly decreases receptor-stimulated GDP exchange." evidence="12">
    <original>F</original>
    <variation>Y</variation>
    <location>
        <position position="191"/>
    </location>
</feature>
<feature type="mutagenesis site" description="Expected to have lost GTPase activity; inhibits the forskolin-mediated increase of cellular cAMP levels. Does not inhibit interaction with RGS14 at centrosomes." evidence="6 8">
    <original>Q</original>
    <variation>L</variation>
    <location>
        <position position="204"/>
    </location>
</feature>
<feature type="mutagenesis site" description="Increases basal GDP exchange rate and inhibits the forskolin-mediated increase of cellular cAMP levels." evidence="8">
    <original>T</original>
    <variation>A</variation>
    <location>
        <position position="329"/>
    </location>
</feature>
<feature type="mutagenesis site" description="Increases basal GDP exchange rate." evidence="8">
    <original>V</original>
    <variation>A</variation>
    <location>
        <position position="332"/>
    </location>
</feature>
<feature type="mutagenesis site" description="Increases basal GDP exchange rate; mildly decreases receptor-stimulated GDP exchange." evidence="12">
    <original>F</original>
    <variation>A</variation>
    <variation>C</variation>
    <location>
        <position position="336"/>
    </location>
</feature>
<feature type="mutagenesis site" description="Strongly increases basal GDP exchange rate; mildly decreases receptor-stimulated GDP exchange." evidence="12">
    <original>F</original>
    <variation>Y</variation>
    <location>
        <position position="336"/>
    </location>
</feature>
<feature type="mutagenesis site" description="Mildly impairs receptor binding; mildly decreases basal and receptor-stimulated GDP exchange." evidence="11">
    <original>K</original>
    <variation>L</variation>
    <location>
        <position position="345"/>
    </location>
</feature>
<feature type="helix" evidence="34">
    <location>
        <begin position="8"/>
        <end position="31"/>
    </location>
</feature>
<feature type="strand" evidence="31">
    <location>
        <begin position="33"/>
        <end position="39"/>
    </location>
</feature>
<feature type="helix" evidence="31">
    <location>
        <begin position="46"/>
        <end position="57"/>
    </location>
</feature>
<feature type="helix" evidence="31">
    <location>
        <begin position="63"/>
        <end position="68"/>
    </location>
</feature>
<feature type="helix" evidence="31">
    <location>
        <begin position="70"/>
        <end position="91"/>
    </location>
</feature>
<feature type="helix" evidence="31">
    <location>
        <begin position="100"/>
        <end position="110"/>
    </location>
</feature>
<feature type="helix" evidence="31">
    <location>
        <begin position="111"/>
        <end position="116"/>
    </location>
</feature>
<feature type="helix" evidence="31">
    <location>
        <begin position="121"/>
        <end position="132"/>
    </location>
</feature>
<feature type="helix" evidence="31">
    <location>
        <begin position="134"/>
        <end position="140"/>
    </location>
</feature>
<feature type="helix" evidence="31">
    <location>
        <begin position="141"/>
        <end position="145"/>
    </location>
</feature>
<feature type="helix" evidence="31">
    <location>
        <begin position="152"/>
        <end position="156"/>
    </location>
</feature>
<feature type="helix" evidence="31">
    <location>
        <begin position="159"/>
        <end position="162"/>
    </location>
</feature>
<feature type="strand" evidence="32">
    <location>
        <begin position="164"/>
        <end position="166"/>
    </location>
</feature>
<feature type="helix" evidence="31">
    <location>
        <begin position="171"/>
        <end position="175"/>
    </location>
</feature>
<feature type="strand" evidence="31">
    <location>
        <begin position="183"/>
        <end position="191"/>
    </location>
</feature>
<feature type="strand" evidence="31">
    <location>
        <begin position="194"/>
        <end position="201"/>
    </location>
</feature>
<feature type="helix" evidence="31">
    <location>
        <begin position="205"/>
        <end position="214"/>
    </location>
</feature>
<feature type="strand" evidence="31">
    <location>
        <begin position="219"/>
        <end position="226"/>
    </location>
</feature>
<feature type="helix" evidence="31">
    <location>
        <begin position="227"/>
        <end position="231"/>
    </location>
</feature>
<feature type="strand" evidence="31">
    <location>
        <begin position="237"/>
        <end position="241"/>
    </location>
</feature>
<feature type="helix" evidence="31">
    <location>
        <begin position="242"/>
        <end position="254"/>
    </location>
</feature>
<feature type="helix" evidence="31">
    <location>
        <begin position="257"/>
        <end position="259"/>
    </location>
</feature>
<feature type="strand" evidence="31">
    <location>
        <begin position="262"/>
        <end position="269"/>
    </location>
</feature>
<feature type="helix" evidence="31">
    <location>
        <begin position="271"/>
        <end position="278"/>
    </location>
</feature>
<feature type="helix" evidence="31">
    <location>
        <begin position="283"/>
        <end position="285"/>
    </location>
</feature>
<feature type="helix" evidence="31">
    <location>
        <begin position="296"/>
        <end position="308"/>
    </location>
</feature>
<feature type="turn" evidence="31">
    <location>
        <begin position="314"/>
        <end position="316"/>
    </location>
</feature>
<feature type="strand" evidence="31">
    <location>
        <begin position="319"/>
        <end position="323"/>
    </location>
</feature>
<feature type="helix" evidence="31">
    <location>
        <begin position="329"/>
        <end position="346"/>
    </location>
</feature>
<feature type="helix" evidence="33">
    <location>
        <begin position="348"/>
        <end position="350"/>
    </location>
</feature>
<protein>
    <recommendedName>
        <fullName>Guanine nucleotide-binding protein G(i) subunit alpha-1</fullName>
        <ecNumber evidence="1">3.6.5.-</ecNumber>
    </recommendedName>
    <alternativeName>
        <fullName>Adenylate cyclase-inhibiting G alpha protein</fullName>
    </alternativeName>
</protein>
<gene>
    <name type="primary">Gnai1</name>
    <name type="synonym">Gnai-1</name>
</gene>
<sequence>MGCTLSAEDKAAVERSKMIDRNLREDGEKAAREVKLLLLGAGESGKSTIVKQMKIIHEAGYSEEECKQYKAVVYSNTIQSIIAIIRAMGRLKIDFGDAARADDARQLFVLAGAAEEGFMTAELAGVIKRLWKDSGVQACFNRSREYQLNDSAAYYLNDLDRIAQPNYIPTQQDVLRTRVKTTGIVETHFTFKDLHFKMFDVGGQRSERKKWIHCFEGVTAIIFCVALSDYDLVLAEDEEMNRMHESMKLFDSICNNKWFTDTSIILFLNKKDLFEEKIKKSPLTICYPEYAGSNTYEEAAAYIQCQFEDLNKRKDTKEIYTHFTCATDTKNVQFVFDAVTDVIIKNNLKDCGLF</sequence>
<dbReference type="EC" id="3.6.5.-" evidence="1"/>
<dbReference type="EMBL" id="M17527">
    <property type="protein sequence ID" value="AAA40825.1"/>
    <property type="molecule type" value="mRNA"/>
</dbReference>
<dbReference type="EMBL" id="DQ120469">
    <property type="protein sequence ID" value="AAZ23808.1"/>
    <property type="molecule type" value="mRNA"/>
</dbReference>
<dbReference type="EMBL" id="DQ120470">
    <property type="protein sequence ID" value="AAZ23809.1"/>
    <property type="molecule type" value="mRNA"/>
</dbReference>
<dbReference type="PIR" id="A35377">
    <property type="entry name" value="A35377"/>
</dbReference>
<dbReference type="PIR" id="C27423">
    <property type="entry name" value="RGRTI1"/>
</dbReference>
<dbReference type="RefSeq" id="NP_037277.1">
    <property type="nucleotide sequence ID" value="NM_013145.2"/>
</dbReference>
<dbReference type="PDB" id="1AGR">
    <property type="method" value="X-ray"/>
    <property type="resolution" value="2.80 A"/>
    <property type="chains" value="A/D=2-354"/>
</dbReference>
<dbReference type="PDB" id="1AS0">
    <property type="method" value="X-ray"/>
    <property type="resolution" value="2.00 A"/>
    <property type="chains" value="A=2-354"/>
</dbReference>
<dbReference type="PDB" id="1AS2">
    <property type="method" value="X-ray"/>
    <property type="resolution" value="2.80 A"/>
    <property type="chains" value="A=2-354"/>
</dbReference>
<dbReference type="PDB" id="1AS3">
    <property type="method" value="X-ray"/>
    <property type="resolution" value="2.40 A"/>
    <property type="chains" value="A=2-354"/>
</dbReference>
<dbReference type="PDB" id="1BH2">
    <property type="method" value="X-ray"/>
    <property type="resolution" value="2.10 A"/>
    <property type="chains" value="A=32-346"/>
</dbReference>
<dbReference type="PDB" id="1BOF">
    <property type="method" value="X-ray"/>
    <property type="resolution" value="2.20 A"/>
    <property type="chains" value="A=2-354"/>
</dbReference>
<dbReference type="PDB" id="1CIP">
    <property type="method" value="X-ray"/>
    <property type="resolution" value="1.50 A"/>
    <property type="chains" value="A=2-354"/>
</dbReference>
<dbReference type="PDB" id="1FQJ">
    <property type="method" value="X-ray"/>
    <property type="resolution" value="2.02 A"/>
    <property type="chains" value="A/D=220-299"/>
</dbReference>
<dbReference type="PDB" id="1FQK">
    <property type="method" value="X-ray"/>
    <property type="resolution" value="2.30 A"/>
    <property type="chains" value="A/C=220-299"/>
</dbReference>
<dbReference type="PDB" id="1GDD">
    <property type="method" value="X-ray"/>
    <property type="resolution" value="2.20 A"/>
    <property type="chains" value="A=2-354"/>
</dbReference>
<dbReference type="PDB" id="1GFI">
    <property type="method" value="X-ray"/>
    <property type="resolution" value="2.20 A"/>
    <property type="chains" value="A=2-354"/>
</dbReference>
<dbReference type="PDB" id="1GG2">
    <property type="method" value="X-ray"/>
    <property type="resolution" value="2.40 A"/>
    <property type="chains" value="A=2-354"/>
</dbReference>
<dbReference type="PDB" id="1GIA">
    <property type="method" value="X-ray"/>
    <property type="resolution" value="2.00 A"/>
    <property type="chains" value="A=2-354"/>
</dbReference>
<dbReference type="PDB" id="1GIL">
    <property type="method" value="X-ray"/>
    <property type="resolution" value="2.30 A"/>
    <property type="chains" value="A=2-354"/>
</dbReference>
<dbReference type="PDB" id="1GIT">
    <property type="method" value="X-ray"/>
    <property type="resolution" value="2.60 A"/>
    <property type="chains" value="A=2-354"/>
</dbReference>
<dbReference type="PDB" id="1GP2">
    <property type="method" value="X-ray"/>
    <property type="resolution" value="2.30 A"/>
    <property type="chains" value="A=2-354"/>
</dbReference>
<dbReference type="PDB" id="1SHZ">
    <property type="method" value="X-ray"/>
    <property type="resolution" value="2.85 A"/>
    <property type="chains" value="A/D=22-48, A/D=185-353"/>
</dbReference>
<dbReference type="PDB" id="1SVK">
    <property type="method" value="X-ray"/>
    <property type="resolution" value="2.00 A"/>
    <property type="chains" value="A=2-354"/>
</dbReference>
<dbReference type="PDB" id="1SVS">
    <property type="method" value="X-ray"/>
    <property type="resolution" value="1.50 A"/>
    <property type="chains" value="A=2-354"/>
</dbReference>
<dbReference type="PDB" id="2BCJ">
    <property type="method" value="X-ray"/>
    <property type="resolution" value="3.06 A"/>
    <property type="chains" value="Q=1-28"/>
</dbReference>
<dbReference type="PDB" id="2RGN">
    <property type="method" value="X-ray"/>
    <property type="resolution" value="3.50 A"/>
    <property type="chains" value="A/D=1-28"/>
</dbReference>
<dbReference type="PDB" id="2ZJY">
    <property type="method" value="X-ray"/>
    <property type="resolution" value="2.80 A"/>
    <property type="chains" value="A=1-354"/>
</dbReference>
<dbReference type="PDB" id="2ZJZ">
    <property type="method" value="X-ray"/>
    <property type="resolution" value="2.60 A"/>
    <property type="chains" value="A/B=1-354"/>
</dbReference>
<dbReference type="PDB" id="3AH8">
    <property type="method" value="X-ray"/>
    <property type="resolution" value="2.90 A"/>
    <property type="chains" value="A=2-28"/>
</dbReference>
<dbReference type="PDB" id="3D7M">
    <property type="method" value="X-ray"/>
    <property type="resolution" value="2.90 A"/>
    <property type="chains" value="A=1-354"/>
</dbReference>
<dbReference type="PDB" id="3FFA">
    <property type="method" value="X-ray"/>
    <property type="resolution" value="2.30 A"/>
    <property type="chains" value="A=1-354"/>
</dbReference>
<dbReference type="PDB" id="3FFB">
    <property type="method" value="X-ray"/>
    <property type="resolution" value="2.57 A"/>
    <property type="chains" value="A=1-354"/>
</dbReference>
<dbReference type="PDB" id="3V00">
    <property type="method" value="X-ray"/>
    <property type="resolution" value="2.90 A"/>
    <property type="chains" value="A/B/C=220-298"/>
</dbReference>
<dbReference type="PDB" id="4N0D">
    <property type="method" value="X-ray"/>
    <property type="resolution" value="1.55 A"/>
    <property type="chains" value="A=1-354"/>
</dbReference>
<dbReference type="PDB" id="4N0E">
    <property type="method" value="X-ray"/>
    <property type="resolution" value="2.10 A"/>
    <property type="chains" value="A=1-354"/>
</dbReference>
<dbReference type="PDB" id="4PAM">
    <property type="method" value="X-ray"/>
    <property type="resolution" value="2.10 A"/>
    <property type="chains" value="A=1-354"/>
</dbReference>
<dbReference type="PDB" id="4PAN">
    <property type="method" value="X-ray"/>
    <property type="resolution" value="2.40 A"/>
    <property type="chains" value="A=1-354"/>
</dbReference>
<dbReference type="PDB" id="4PAO">
    <property type="method" value="X-ray"/>
    <property type="resolution" value="2.00 A"/>
    <property type="chains" value="A=1-354"/>
</dbReference>
<dbReference type="PDB" id="4PAQ">
    <property type="method" value="X-ray"/>
    <property type="resolution" value="2.00 A"/>
    <property type="chains" value="A=1-354"/>
</dbReference>
<dbReference type="PDB" id="5KDL">
    <property type="method" value="X-ray"/>
    <property type="resolution" value="2.67 A"/>
    <property type="chains" value="A/B=1-354"/>
</dbReference>
<dbReference type="PDB" id="5KDO">
    <property type="method" value="X-ray"/>
    <property type="resolution" value="1.90 A"/>
    <property type="chains" value="A=1-354"/>
</dbReference>
<dbReference type="PDB" id="6M8H">
    <property type="method" value="X-ray"/>
    <property type="resolution" value="2.07 A"/>
    <property type="chains" value="A=1-354"/>
</dbReference>
<dbReference type="PDB" id="6TYL">
    <property type="method" value="X-ray"/>
    <property type="resolution" value="3.30 A"/>
    <property type="chains" value="B/G=1-354"/>
</dbReference>
<dbReference type="PDB" id="6UKT">
    <property type="method" value="EM"/>
    <property type="resolution" value="3.87 A"/>
    <property type="chains" value="B=32-354"/>
</dbReference>
<dbReference type="PDB" id="6VMS">
    <property type="method" value="EM"/>
    <property type="resolution" value="3.80 A"/>
    <property type="chains" value="A=1-354"/>
</dbReference>
<dbReference type="PDB" id="7S0F">
    <property type="method" value="EM"/>
    <property type="resolution" value="2.96 A"/>
    <property type="chains" value="A=1-354"/>
</dbReference>
<dbReference type="PDB" id="7S0G">
    <property type="method" value="EM"/>
    <property type="resolution" value="3.86 A"/>
    <property type="chains" value="A=1-343"/>
</dbReference>
<dbReference type="PDB" id="9CBL">
    <property type="method" value="EM"/>
    <property type="resolution" value="2.80 A"/>
    <property type="chains" value="A=1-354"/>
</dbReference>
<dbReference type="PDB" id="9CBM">
    <property type="method" value="EM"/>
    <property type="resolution" value="3.20 A"/>
    <property type="chains" value="A=1-354"/>
</dbReference>
<dbReference type="PDBsum" id="1AGR"/>
<dbReference type="PDBsum" id="1AS0"/>
<dbReference type="PDBsum" id="1AS2"/>
<dbReference type="PDBsum" id="1AS3"/>
<dbReference type="PDBsum" id="1BH2"/>
<dbReference type="PDBsum" id="1BOF"/>
<dbReference type="PDBsum" id="1CIP"/>
<dbReference type="PDBsum" id="1FQJ"/>
<dbReference type="PDBsum" id="1FQK"/>
<dbReference type="PDBsum" id="1GDD"/>
<dbReference type="PDBsum" id="1GFI"/>
<dbReference type="PDBsum" id="1GG2"/>
<dbReference type="PDBsum" id="1GIA"/>
<dbReference type="PDBsum" id="1GIL"/>
<dbReference type="PDBsum" id="1GIT"/>
<dbReference type="PDBsum" id="1GP2"/>
<dbReference type="PDBsum" id="1SHZ"/>
<dbReference type="PDBsum" id="1SVK"/>
<dbReference type="PDBsum" id="1SVS"/>
<dbReference type="PDBsum" id="2BCJ"/>
<dbReference type="PDBsum" id="2RGN"/>
<dbReference type="PDBsum" id="2ZJY"/>
<dbReference type="PDBsum" id="2ZJZ"/>
<dbReference type="PDBsum" id="3AH8"/>
<dbReference type="PDBsum" id="3D7M"/>
<dbReference type="PDBsum" id="3FFA"/>
<dbReference type="PDBsum" id="3FFB"/>
<dbReference type="PDBsum" id="3V00"/>
<dbReference type="PDBsum" id="4N0D"/>
<dbReference type="PDBsum" id="4N0E"/>
<dbReference type="PDBsum" id="4PAM"/>
<dbReference type="PDBsum" id="4PAN"/>
<dbReference type="PDBsum" id="4PAO"/>
<dbReference type="PDBsum" id="4PAQ"/>
<dbReference type="PDBsum" id="5KDL"/>
<dbReference type="PDBsum" id="5KDO"/>
<dbReference type="PDBsum" id="6M8H"/>
<dbReference type="PDBsum" id="6TYL"/>
<dbReference type="PDBsum" id="6UKT"/>
<dbReference type="PDBsum" id="6VMS"/>
<dbReference type="PDBsum" id="7S0F"/>
<dbReference type="PDBsum" id="7S0G"/>
<dbReference type="PDBsum" id="9CBL"/>
<dbReference type="PDBsum" id="9CBM"/>
<dbReference type="EMDB" id="EMD-20812"/>
<dbReference type="EMDB" id="EMD-21243"/>
<dbReference type="EMDB" id="EMD-24789"/>
<dbReference type="EMDB" id="EMD-45425"/>
<dbReference type="EMDB" id="EMD-45426"/>
<dbReference type="SASBDB" id="P10824"/>
<dbReference type="SMR" id="P10824"/>
<dbReference type="BioGRID" id="247715">
    <property type="interactions" value="2"/>
</dbReference>
<dbReference type="CORUM" id="P10824"/>
<dbReference type="DIP" id="DIP-6073N"/>
<dbReference type="FunCoup" id="P10824">
    <property type="interactions" value="3167"/>
</dbReference>
<dbReference type="IntAct" id="P10824">
    <property type="interactions" value="5"/>
</dbReference>
<dbReference type="MINT" id="P10824"/>
<dbReference type="STRING" id="10116.ENSRNOP00000074036"/>
<dbReference type="iPTMnet" id="P10824"/>
<dbReference type="PhosphoSitePlus" id="P10824"/>
<dbReference type="SwissPalm" id="P10824"/>
<dbReference type="jPOST" id="P10824"/>
<dbReference type="ABCD" id="P10824">
    <property type="antibodies" value="1 sequenced antibody"/>
</dbReference>
<dbReference type="Ensembl" id="ENSRNOT00000091004.2">
    <property type="protein sequence ID" value="ENSRNOP00000074036.1"/>
    <property type="gene ID" value="ENSRNOG00000057096.2"/>
</dbReference>
<dbReference type="GeneID" id="25686"/>
<dbReference type="KEGG" id="rno:25686"/>
<dbReference type="AGR" id="RGD:2713"/>
<dbReference type="CTD" id="2770"/>
<dbReference type="RGD" id="2713">
    <property type="gene designation" value="Gnai1"/>
</dbReference>
<dbReference type="GeneTree" id="ENSGT00940000153567"/>
<dbReference type="HOGENOM" id="CLU_014184_6_0_1"/>
<dbReference type="InParanoid" id="P10824"/>
<dbReference type="OMA" id="QVIWADA"/>
<dbReference type="OrthoDB" id="6622at9989"/>
<dbReference type="PhylomeDB" id="P10824"/>
<dbReference type="Reactome" id="R-RNO-170670">
    <property type="pathway name" value="Adenylate cyclase inhibitory pathway"/>
</dbReference>
<dbReference type="Reactome" id="R-RNO-392170">
    <property type="pathway name" value="ADP signalling through P2Y purinoceptor 12"/>
</dbReference>
<dbReference type="Reactome" id="R-RNO-400042">
    <property type="pathway name" value="Adrenaline,noradrenaline inhibits insulin secretion"/>
</dbReference>
<dbReference type="Reactome" id="R-RNO-418594">
    <property type="pathway name" value="G alpha (i) signalling events"/>
</dbReference>
<dbReference type="Reactome" id="R-RNO-9009391">
    <property type="pathway name" value="Extra-nuclear estrogen signaling"/>
</dbReference>
<dbReference type="SABIO-RK" id="P10824"/>
<dbReference type="EvolutionaryTrace" id="P10824"/>
<dbReference type="PRO" id="PR:P10824"/>
<dbReference type="Proteomes" id="UP000002494">
    <property type="component" value="Chromosome 4"/>
</dbReference>
<dbReference type="Bgee" id="ENSRNOG00000057096">
    <property type="expression patterns" value="Expressed in cerebellum and 18 other cell types or tissues"/>
</dbReference>
<dbReference type="GO" id="GO:0005938">
    <property type="term" value="C:cell cortex"/>
    <property type="evidence" value="ECO:0000250"/>
    <property type="project" value="UniProtKB"/>
</dbReference>
<dbReference type="GO" id="GO:0005813">
    <property type="term" value="C:centrosome"/>
    <property type="evidence" value="ECO:0000314"/>
    <property type="project" value="UniProtKB"/>
</dbReference>
<dbReference type="GO" id="GO:0005737">
    <property type="term" value="C:cytoplasm"/>
    <property type="evidence" value="ECO:0000314"/>
    <property type="project" value="UniProtKB"/>
</dbReference>
<dbReference type="GO" id="GO:0005829">
    <property type="term" value="C:cytosol"/>
    <property type="evidence" value="ECO:0000266"/>
    <property type="project" value="RGD"/>
</dbReference>
<dbReference type="GO" id="GO:0098978">
    <property type="term" value="C:glutamatergic synapse"/>
    <property type="evidence" value="ECO:0000314"/>
    <property type="project" value="SynGO"/>
</dbReference>
<dbReference type="GO" id="GO:0005834">
    <property type="term" value="C:heterotrimeric G-protein complex"/>
    <property type="evidence" value="ECO:0000266"/>
    <property type="project" value="RGD"/>
</dbReference>
<dbReference type="GO" id="GO:0030496">
    <property type="term" value="C:midbody"/>
    <property type="evidence" value="ECO:0000250"/>
    <property type="project" value="UniProtKB"/>
</dbReference>
<dbReference type="GO" id="GO:0005634">
    <property type="term" value="C:nucleus"/>
    <property type="evidence" value="ECO:0007669"/>
    <property type="project" value="UniProtKB-SubCell"/>
</dbReference>
<dbReference type="GO" id="GO:0005886">
    <property type="term" value="C:plasma membrane"/>
    <property type="evidence" value="ECO:0000314"/>
    <property type="project" value="UniProtKB"/>
</dbReference>
<dbReference type="GO" id="GO:0098794">
    <property type="term" value="C:postsynapse"/>
    <property type="evidence" value="ECO:0000314"/>
    <property type="project" value="SynGO"/>
</dbReference>
<dbReference type="GO" id="GO:0032991">
    <property type="term" value="C:protein-containing complex"/>
    <property type="evidence" value="ECO:0000314"/>
    <property type="project" value="RGD"/>
</dbReference>
<dbReference type="GO" id="GO:0010854">
    <property type="term" value="F:adenylate cyclase regulator activity"/>
    <property type="evidence" value="ECO:0000266"/>
    <property type="project" value="RGD"/>
</dbReference>
<dbReference type="GO" id="GO:0031749">
    <property type="term" value="F:D2 dopamine receptor binding"/>
    <property type="evidence" value="ECO:0000266"/>
    <property type="project" value="RGD"/>
</dbReference>
<dbReference type="GO" id="GO:0003925">
    <property type="term" value="F:G protein activity"/>
    <property type="evidence" value="ECO:0000266"/>
    <property type="project" value="RGD"/>
</dbReference>
<dbReference type="GO" id="GO:0001664">
    <property type="term" value="F:G protein-coupled receptor binding"/>
    <property type="evidence" value="ECO:0000314"/>
    <property type="project" value="UniProtKB"/>
</dbReference>
<dbReference type="GO" id="GO:0031821">
    <property type="term" value="F:G protein-coupled serotonin receptor binding"/>
    <property type="evidence" value="ECO:0000353"/>
    <property type="project" value="RGD"/>
</dbReference>
<dbReference type="GO" id="GO:0031683">
    <property type="term" value="F:G-protein beta/gamma-subunit complex binding"/>
    <property type="evidence" value="ECO:0000318"/>
    <property type="project" value="GO_Central"/>
</dbReference>
<dbReference type="GO" id="GO:0019003">
    <property type="term" value="F:GDP binding"/>
    <property type="evidence" value="ECO:0000314"/>
    <property type="project" value="UniProtKB"/>
</dbReference>
<dbReference type="GO" id="GO:0005525">
    <property type="term" value="F:GTP binding"/>
    <property type="evidence" value="ECO:0000314"/>
    <property type="project" value="UniProtKB"/>
</dbReference>
<dbReference type="GO" id="GO:0032794">
    <property type="term" value="F:GTPase activating protein binding"/>
    <property type="evidence" value="ECO:0000314"/>
    <property type="project" value="RGD"/>
</dbReference>
<dbReference type="GO" id="GO:0003924">
    <property type="term" value="F:GTPase activity"/>
    <property type="evidence" value="ECO:0000314"/>
    <property type="project" value="UniProtKB"/>
</dbReference>
<dbReference type="GO" id="GO:0000287">
    <property type="term" value="F:magnesium ion binding"/>
    <property type="evidence" value="ECO:0000314"/>
    <property type="project" value="UniProtKB"/>
</dbReference>
<dbReference type="GO" id="GO:0007193">
    <property type="term" value="P:adenylate cyclase-inhibiting G protein-coupled receptor signaling pathway"/>
    <property type="evidence" value="ECO:0000266"/>
    <property type="project" value="RGD"/>
</dbReference>
<dbReference type="GO" id="GO:0007198">
    <property type="term" value="P:adenylate cyclase-inhibiting serotonin receptor signaling pathway"/>
    <property type="evidence" value="ECO:0000266"/>
    <property type="project" value="RGD"/>
</dbReference>
<dbReference type="GO" id="GO:0007188">
    <property type="term" value="P:adenylate cyclase-modulating G protein-coupled receptor signaling pathway"/>
    <property type="evidence" value="ECO:0000315"/>
    <property type="project" value="UniProtKB"/>
</dbReference>
<dbReference type="GO" id="GO:0051301">
    <property type="term" value="P:cell division"/>
    <property type="evidence" value="ECO:0000250"/>
    <property type="project" value="UniProtKB"/>
</dbReference>
<dbReference type="GO" id="GO:1904322">
    <property type="term" value="P:cellular response to forskolin"/>
    <property type="evidence" value="ECO:0000315"/>
    <property type="project" value="UniProtKB"/>
</dbReference>
<dbReference type="GO" id="GO:0007186">
    <property type="term" value="P:G protein-coupled receptor signaling pathway"/>
    <property type="evidence" value="ECO:0000314"/>
    <property type="project" value="UniProtKB"/>
</dbReference>
<dbReference type="GO" id="GO:0050805">
    <property type="term" value="P:negative regulation of synaptic transmission"/>
    <property type="evidence" value="ECO:0000315"/>
    <property type="project" value="RGD"/>
</dbReference>
<dbReference type="GO" id="GO:0099645">
    <property type="term" value="P:neurotransmitter receptor localization to postsynaptic specialization membrane"/>
    <property type="evidence" value="ECO:0000314"/>
    <property type="project" value="SynGO"/>
</dbReference>
<dbReference type="GO" id="GO:0045542">
    <property type="term" value="P:positive regulation of cholesterol biosynthetic process"/>
    <property type="evidence" value="ECO:0000266"/>
    <property type="project" value="RGD"/>
</dbReference>
<dbReference type="GO" id="GO:1904778">
    <property type="term" value="P:positive regulation of protein localization to cell cortex"/>
    <property type="evidence" value="ECO:0000250"/>
    <property type="project" value="UniProtKB"/>
</dbReference>
<dbReference type="GO" id="GO:0060236">
    <property type="term" value="P:regulation of mitotic spindle organization"/>
    <property type="evidence" value="ECO:0000250"/>
    <property type="project" value="UniProtKB"/>
</dbReference>
<dbReference type="GO" id="GO:0034695">
    <property type="term" value="P:response to prostaglandin E"/>
    <property type="evidence" value="ECO:0000266"/>
    <property type="project" value="RGD"/>
</dbReference>
<dbReference type="GO" id="GO:0072678">
    <property type="term" value="P:T cell migration"/>
    <property type="evidence" value="ECO:0000266"/>
    <property type="project" value="RGD"/>
</dbReference>
<dbReference type="CDD" id="cd00066">
    <property type="entry name" value="G-alpha"/>
    <property type="match status" value="1"/>
</dbReference>
<dbReference type="FunFam" id="1.10.400.10:FF:000001">
    <property type="entry name" value="Guanine nucleotide-binding protein G(I) subunit alpha"/>
    <property type="match status" value="1"/>
</dbReference>
<dbReference type="FunFam" id="3.40.50.300:FF:002487">
    <property type="entry name" value="Guanine nucleotide-binding protein G(i) subunit alpha-1"/>
    <property type="match status" value="1"/>
</dbReference>
<dbReference type="FunFam" id="3.40.50.300:FF:003559">
    <property type="entry name" value="Guanine nucleotide-binding protein G(i) subunit alpha-1"/>
    <property type="match status" value="1"/>
</dbReference>
<dbReference type="Gene3D" id="1.10.400.10">
    <property type="entry name" value="GI Alpha 1, domain 2-like"/>
    <property type="match status" value="1"/>
</dbReference>
<dbReference type="Gene3D" id="3.40.50.300">
    <property type="entry name" value="P-loop containing nucleotide triphosphate hydrolases"/>
    <property type="match status" value="1"/>
</dbReference>
<dbReference type="InterPro" id="IPR001408">
    <property type="entry name" value="Gprotein_alpha_I"/>
</dbReference>
<dbReference type="InterPro" id="IPR001019">
    <property type="entry name" value="Gprotein_alpha_su"/>
</dbReference>
<dbReference type="InterPro" id="IPR011025">
    <property type="entry name" value="GproteinA_insert"/>
</dbReference>
<dbReference type="InterPro" id="IPR027417">
    <property type="entry name" value="P-loop_NTPase"/>
</dbReference>
<dbReference type="PANTHER" id="PTHR10218">
    <property type="entry name" value="GTP-BINDING PROTEIN ALPHA SUBUNIT"/>
    <property type="match status" value="1"/>
</dbReference>
<dbReference type="PANTHER" id="PTHR10218:SF359">
    <property type="entry name" value="GUANINE NUCLEOTIDE-BINDING PROTEIN G(I) SUBUNIT ALPHA-1"/>
    <property type="match status" value="1"/>
</dbReference>
<dbReference type="Pfam" id="PF00503">
    <property type="entry name" value="G-alpha"/>
    <property type="match status" value="1"/>
</dbReference>
<dbReference type="PRINTS" id="PR00318">
    <property type="entry name" value="GPROTEINA"/>
</dbReference>
<dbReference type="PRINTS" id="PR00441">
    <property type="entry name" value="GPROTEINAI"/>
</dbReference>
<dbReference type="SMART" id="SM00275">
    <property type="entry name" value="G_alpha"/>
    <property type="match status" value="1"/>
</dbReference>
<dbReference type="SUPFAM" id="SSF52540">
    <property type="entry name" value="P-loop containing nucleoside triphosphate hydrolases"/>
    <property type="match status" value="1"/>
</dbReference>
<dbReference type="SUPFAM" id="SSF47895">
    <property type="entry name" value="Transducin (alpha subunit), insertion domain"/>
    <property type="match status" value="1"/>
</dbReference>
<dbReference type="PROSITE" id="PS51882">
    <property type="entry name" value="G_ALPHA"/>
    <property type="match status" value="1"/>
</dbReference>
<keyword id="KW-0002">3D-structure</keyword>
<keyword id="KW-0131">Cell cycle</keyword>
<keyword id="KW-0132">Cell division</keyword>
<keyword id="KW-1003">Cell membrane</keyword>
<keyword id="KW-0963">Cytoplasm</keyword>
<keyword id="KW-0206">Cytoskeleton</keyword>
<keyword id="KW-0342">GTP-binding</keyword>
<keyword id="KW-0378">Hydrolase</keyword>
<keyword id="KW-0449">Lipoprotein</keyword>
<keyword id="KW-0460">Magnesium</keyword>
<keyword id="KW-0472">Membrane</keyword>
<keyword id="KW-0479">Metal-binding</keyword>
<keyword id="KW-0498">Mitosis</keyword>
<keyword id="KW-0519">Myristate</keyword>
<keyword id="KW-0547">Nucleotide-binding</keyword>
<keyword id="KW-0539">Nucleus</keyword>
<keyword id="KW-0564">Palmitate</keyword>
<keyword id="KW-1185">Reference proteome</keyword>
<keyword id="KW-0807">Transducer</keyword>
<keyword id="KW-0813">Transport</keyword>
<reference key="1">
    <citation type="journal article" date="1987" name="J. Biol. Chem.">
        <title>Molecular cloning of five GTP-binding protein cDNA species from rat olfactory neuroepithelium.</title>
        <authorList>
            <person name="Jones D.T."/>
            <person name="Reed R.R."/>
        </authorList>
    </citation>
    <scope>NUCLEOTIDE SEQUENCE [MRNA]</scope>
</reference>
<reference key="2">
    <citation type="submission" date="2005-07" db="EMBL/GenBank/DDBJ databases">
        <title>Genetic similarity between spontaneously hypertensive rats and Wistar-Kyoto rats in the coding regions of signal transduction proteins.</title>
        <authorList>
            <person name="Jackson E.K."/>
            <person name="Zhu C."/>
        </authorList>
    </citation>
    <scope>NUCLEOTIDE SEQUENCE [MRNA]</scope>
    <source>
        <strain>SHR</strain>
        <strain>Wistar Kyoto</strain>
    </source>
</reference>
<reference key="3">
    <citation type="journal article" date="2000" name="Proc. Natl. Acad. Sci. U.S.A.">
        <title>Activator of G protein signaling 3 is a guanine dissociation inhibitor for Galpha i subunits.</title>
        <authorList>
            <person name="de Vries L."/>
            <person name="Fischer T."/>
            <person name="Tronchere H."/>
            <person name="Brothers G.M."/>
            <person name="Strockbine B."/>
            <person name="Siderovski D.P."/>
            <person name="Farquhar M.G."/>
        </authorList>
    </citation>
    <scope>INTERACTION WITH GPSM1</scope>
</reference>
<reference key="4">
    <citation type="journal article" date="2001" name="J. Biol. Chem.">
        <title>RGS12 and RGS14 GoLoco motifs are G alpha(i) interaction sites with guanine nucleotide dissociation inhibitor activity.</title>
        <authorList>
            <person name="Kimple R.J."/>
            <person name="De Vries L."/>
            <person name="Tronchere H."/>
            <person name="Behe C.I."/>
            <person name="Morris R.A."/>
            <person name="Gist Farquhar M."/>
            <person name="Siderovski D.P."/>
        </authorList>
    </citation>
    <scope>INTERACTION WITH RGS12 AND RGS14</scope>
</reference>
<reference key="5">
    <citation type="journal article" date="2007" name="Cell. Signal.">
        <title>Selective interactions between Gi alpha1 and Gi alpha3 and the GoLoco/GPR domain of RGS14 influence its dynamic subcellular localization.</title>
        <authorList>
            <person name="Shu F.J."/>
            <person name="Ramineni S."/>
            <person name="Amyot W."/>
            <person name="Hepler J.R."/>
        </authorList>
    </citation>
    <scope>FUNCTION</scope>
    <scope>INTERACTION WITH RGS14</scope>
    <scope>SUBCELLULAR LOCATION</scope>
</reference>
<reference key="6">
    <citation type="journal article" date="2007" name="J. Cell Biol.">
        <title>Localization of Gi alpha proteins in the centrosomes and at the midbody: implication for their role in cell division.</title>
        <authorList>
            <person name="Cho H."/>
            <person name="Kehrl J.H."/>
        </authorList>
    </citation>
    <scope>SUBCELLULAR LOCATION</scope>
    <scope>INTERACTION WITH RGS14</scope>
    <scope>MUTAGENESIS OF GLN-204</scope>
</reference>
<reference key="7">
    <citation type="journal article" date="2009" name="Proc. Natl. Acad. Sci. U.S.A.">
        <title>GIV is a nonreceptor GEF for G alpha i with a unique motif that regulates Akt signaling.</title>
        <authorList>
            <person name="Garcia-Marcos M."/>
            <person name="Ghosh P."/>
            <person name="Farquhar M.G."/>
        </authorList>
    </citation>
    <scope>INTERACTION WITH CCDC88A</scope>
</reference>
<reference key="8">
    <citation type="journal article" date="2011" name="Biochemistry">
        <title>Activation of the regulator of G protein signaling 14-Galphai1-GDP signaling complex is regulated by resistance to inhibitors of cholinesterase-8A.</title>
        <authorList>
            <person name="Vellano C.P."/>
            <person name="Shu F.J."/>
            <person name="Ramineni S."/>
            <person name="Yates C.K."/>
            <person name="Tall G.G."/>
            <person name="Hepler J.R."/>
        </authorList>
    </citation>
    <scope>INTERACTION WITH RGS14 AND RIC8A</scope>
    <scope>MUTAGENESIS OF ASN-149</scope>
    <scope>SUBCELLULAR LOCATION</scope>
</reference>
<reference key="9">
    <citation type="journal article" date="2011" name="J. Biol. Chem.">
        <title>G Protein binding sites on Calnuc (nucleobindin 1) and NUCB2 (nucleobindin 2) define a new class of G(alpha)i-regulatory motifs.</title>
        <authorList>
            <person name="Garcia-Marcos M."/>
            <person name="Kietrsunthorn P.S."/>
            <person name="Wang H."/>
            <person name="Ghosh P."/>
            <person name="Farquhar M.G."/>
        </authorList>
    </citation>
    <scope>INTERACTION WITH NUCB1</scope>
</reference>
<reference key="10">
    <citation type="journal article" date="2015" name="Biochim. Biophys. Acta">
        <title>G protein-membrane interactions I: Galphai1 myristoyl and palmitoyl modifications in protein-lipid interactions and its implications in membrane microdomain localization.</title>
        <authorList>
            <person name="Alvarez R."/>
            <person name="Lopez D.J."/>
            <person name="Casas J."/>
            <person name="Llado V."/>
            <person name="Higuera M."/>
            <person name="Nagy T."/>
            <person name="Barcelo M."/>
            <person name="Busquets X."/>
            <person name="Escriba P.V."/>
        </authorList>
    </citation>
    <scope>MYRISTOYLATION AT GLY-2</scope>
    <scope>PALMITOYLATION AT CYS-3</scope>
    <scope>MUTAGENESIS OF GLY-2 AND CYS-3</scope>
    <scope>SUBCELLULAR LOCATION</scope>
</reference>
<reference key="11">
    <citation type="journal article" date="1994" name="Science">
        <title>Structures of active conformations of Gi alpha 1 and the mechanism of GTP hydrolysis.</title>
        <authorList>
            <person name="Coleman D.E."/>
            <person name="Berghuis A.M."/>
            <person name="Lee E."/>
            <person name="Linder M.E."/>
            <person name="Gilman A.G."/>
            <person name="Sprang S.R."/>
        </authorList>
    </citation>
    <scope>X-RAY CRYSTALLOGRAPHY (2.0 ANGSTROMS) IN COMPLEX WITH GDP</scope>
</reference>
<reference key="12">
    <citation type="journal article" date="1995" name="Cell">
        <title>The structure of the G protein heterotrimer Gi alpha 1 beta 1 gamma 2.</title>
        <authorList>
            <person name="Wall M.A."/>
            <person name="Coleman D.E."/>
            <person name="Lee E."/>
            <person name="Iniguez-Lluhi J.A."/>
            <person name="Posner B.A."/>
            <person name="Gilman A.G."/>
            <person name="Sprang S.R."/>
        </authorList>
    </citation>
    <scope>X-RAY CRYSTALLOGRAPHY (2.3 ANGSTROMS) IN COMPLEX WITH GNB1; GNG2 AND GDP</scope>
    <scope>SUBUNIT</scope>
</reference>
<reference key="13">
    <citation type="journal article" date="1997" name="Cell">
        <title>Structure of RGS4 bound to AlF4-activated G(i alpha1): stabilization of the transition state for GTP hydrolysis.</title>
        <authorList>
            <person name="Tesmer J.J.G."/>
            <person name="Berman D.M."/>
            <person name="Gilman A.G."/>
            <person name="Sprang S.R."/>
        </authorList>
    </citation>
    <scope>X-RAY CRYSTALLOGRAPHY (2.8 ANGSTROMS) IN COMPLEX WITH RGS4 AND GDP</scope>
    <scope>INTERACTION WITH RGS4</scope>
</reference>
<reference key="14">
    <citation type="journal article" date="1998" name="Biochemistry">
        <title>Crystal structures of the G protein Gi alpha 1 complexed with GDP and Mg2+: a crystallographic titration experiment.</title>
        <authorList>
            <person name="Coleman D.E."/>
            <person name="Sprang S.R."/>
        </authorList>
    </citation>
    <scope>X-RAY CRYSTALLOGRAPHY (2.2 ANGSTROMS) IN COMPLEX WITH GDP</scope>
</reference>
<reference key="15">
    <citation type="journal article" date="1998" name="J. Biol. Chem.">
        <title>The A326S mutant of Gialpha1 as an approximation of the receptor-bound state.</title>
        <authorList>
            <person name="Posner B.A."/>
            <person name="Mixon M.B."/>
            <person name="Wall M.A."/>
            <person name="Sprang S.R."/>
            <person name="Gilman A.G."/>
        </authorList>
    </citation>
    <scope>X-RAY CRYSTALLOGRAPHY (2.1 ANGSTROMS) OF 32-346 IN COMPLEX WITH GDP AND MAGNESIUM</scope>
</reference>
<reference key="16">
    <citation type="journal article" date="2009" name="J. Mol. Biol.">
        <title>Structural evidence for a sequential release mechanism for activation of heterotrimeric G proteins.</title>
        <authorList>
            <person name="Kapoor N."/>
            <person name="Menon S.T."/>
            <person name="Chauhan R."/>
            <person name="Sachdev P."/>
            <person name="Sakmar T.P."/>
        </authorList>
    </citation>
    <scope>X-RAY CRYSTALLOGRAPHY (2.30 ANGSTROMS) OF 1-348 OF MUTANT ALA-329 IN COMPLEXES WITH MAGNESIUM; GDP AND GTP ANALOG</scope>
    <scope>FUNCTION</scope>
    <scope>MUTAGENESIS OF GLN-204; THR-329 AND VAL-332</scope>
</reference>
<reference key="17">
    <citation type="journal article" date="2014" name="J. Biol. Chem.">
        <title>A transient interaction between the phosphate binding loop and switch I contributes to the allosteric network between receptor and nucleotide in Galphai1.</title>
        <authorList>
            <person name="Thaker T.M."/>
            <person name="Sarwar M."/>
            <person name="Preininger A.M."/>
            <person name="Hamm H.E."/>
            <person name="Iverson T.M."/>
        </authorList>
    </citation>
    <scope>X-RAY CRYSTALLOGRAPHY (1.55 ANGSTROMS) IN COMPLEXES WITH GDP AND GTP ANALOG</scope>
    <scope>FUNCTION</scope>
    <scope>SUBCELLULAR LOCATION</scope>
    <scope>SUBUNIT</scope>
    <scope>INTERACTION WITH GNB1 AND GNG1</scope>
    <scope>MUTAGENESIS OF GLU-43 AND LYS-345</scope>
</reference>
<reference key="18">
    <citation type="journal article" date="2014" name="J. Biol. Chem.">
        <title>A conserved phenylalanine as a relay between the alpha5 helix and the GDP binding region of heterotrimeric Gi protein alpha subunit.</title>
        <authorList>
            <person name="Kaya A.I."/>
            <person name="Lokits A.D."/>
            <person name="Gilbert J.A."/>
            <person name="Iverson T.M."/>
            <person name="Meiler J."/>
            <person name="Hamm H.E."/>
        </authorList>
    </citation>
    <scope>X-RAY CRYSTALLOGRAPHY (2.00 ANGSTROMS) OF WILD-TYPE AND MUTANTS CYS-336 AND TYR-336 IN COMPLEXES WITH MAGNESIUM; GDP AND GTP ANALOG</scope>
    <scope>FUNCTION</scope>
    <scope>SUBUNIT</scope>
    <scope>MUTAGENESIS OF PHE-189; PHE-191 AND PHE-336</scope>
</reference>
<reference evidence="29 30" key="19">
    <citation type="journal article" date="2020" name="Nat. Commun.">
        <title>Structure of the G protein chaperone and Chaperone Ric-8A bound to Galphai1.</title>
        <authorList>
            <person name="McClelland L.J."/>
            <person name="Zhang K."/>
            <person name="Mou T.C."/>
            <person name="Johnston J."/>
            <person name="Yates-Hansen C."/>
            <person name="Li S."/>
            <person name="Thomas C.J."/>
            <person name="Doukov T.I."/>
            <person name="Triest S."/>
            <person name="Wohlkonig A."/>
            <person name="Tall G.G."/>
            <person name="Steyaert J."/>
            <person name="Chiu W."/>
            <person name="Sprang S.R."/>
        </authorList>
    </citation>
    <scope>X-RAY CRYSTALLOGRAPHY (3.30 ANGSTROMS) OF 32-354 IN COMPLEX WITH RIC8A</scope>
    <scope>INTERACTION WITH RIC8A</scope>
</reference>
<evidence type="ECO:0000250" key="1">
    <source>
        <dbReference type="UniProtKB" id="P63096"/>
    </source>
</evidence>
<evidence type="ECO:0000255" key="2">
    <source>
        <dbReference type="PROSITE-ProRule" id="PRU01230"/>
    </source>
</evidence>
<evidence type="ECO:0000269" key="3">
    <source>
    </source>
</evidence>
<evidence type="ECO:0000269" key="4">
    <source>
    </source>
</evidence>
<evidence type="ECO:0000269" key="5">
    <source>
    </source>
</evidence>
<evidence type="ECO:0000269" key="6">
    <source>
    </source>
</evidence>
<evidence type="ECO:0000269" key="7">
    <source>
    </source>
</evidence>
<evidence type="ECO:0000269" key="8">
    <source>
    </source>
</evidence>
<evidence type="ECO:0000269" key="9">
    <source>
    </source>
</evidence>
<evidence type="ECO:0000269" key="10">
    <source>
    </source>
</evidence>
<evidence type="ECO:0000269" key="11">
    <source>
    </source>
</evidence>
<evidence type="ECO:0000269" key="12">
    <source>
    </source>
</evidence>
<evidence type="ECO:0000269" key="13">
    <source>
    </source>
</evidence>
<evidence type="ECO:0000269" key="14">
    <source>
    </source>
</evidence>
<evidence type="ECO:0000269" key="15">
    <source>
    </source>
</evidence>
<evidence type="ECO:0000269" key="16">
    <source>
    </source>
</evidence>
<evidence type="ECO:0000269" key="17">
    <source>
    </source>
</evidence>
<evidence type="ECO:0000305" key="18"/>
<evidence type="ECO:0000305" key="19">
    <source>
    </source>
</evidence>
<evidence type="ECO:0000305" key="20">
    <source>
    </source>
</evidence>
<evidence type="ECO:0007744" key="21">
    <source>
        <dbReference type="PDB" id="1AS0"/>
    </source>
</evidence>
<evidence type="ECO:0007744" key="22">
    <source>
        <dbReference type="PDB" id="1BH2"/>
    </source>
</evidence>
<evidence type="ECO:0007744" key="23">
    <source>
        <dbReference type="PDB" id="1GIA"/>
    </source>
</evidence>
<evidence type="ECO:0007744" key="24">
    <source>
        <dbReference type="PDB" id="1GIL"/>
    </source>
</evidence>
<evidence type="ECO:0007744" key="25">
    <source>
        <dbReference type="PDB" id="3FFA"/>
    </source>
</evidence>
<evidence type="ECO:0007744" key="26">
    <source>
        <dbReference type="PDB" id="4N0D"/>
    </source>
</evidence>
<evidence type="ECO:0007744" key="27">
    <source>
        <dbReference type="PDB" id="4PAO"/>
    </source>
</evidence>
<evidence type="ECO:0007744" key="28">
    <source>
        <dbReference type="PDB" id="4PAQ"/>
    </source>
</evidence>
<evidence type="ECO:0007744" key="29">
    <source>
        <dbReference type="PDB" id="6TYL"/>
    </source>
</evidence>
<evidence type="ECO:0007744" key="30">
    <source>
        <dbReference type="PDB" id="6UKT"/>
    </source>
</evidence>
<evidence type="ECO:0007829" key="31">
    <source>
        <dbReference type="PDB" id="1CIP"/>
    </source>
</evidence>
<evidence type="ECO:0007829" key="32">
    <source>
        <dbReference type="PDB" id="2ZJY"/>
    </source>
</evidence>
<evidence type="ECO:0007829" key="33">
    <source>
        <dbReference type="PDB" id="4N0E"/>
    </source>
</evidence>
<evidence type="ECO:0007829" key="34">
    <source>
        <dbReference type="PDB" id="5KDO"/>
    </source>
</evidence>
<comment type="function">
    <text evidence="1 5 8 9 11 12 18">Guanine nucleotide-binding proteins (G proteins) function as transducers downstream of G protein-coupled receptors (GPCRs) in numerous signaling cascades (PubMed:19703466, PubMed:24596087, PubMed:25037222). The alpha chain contains the guanine nucleotide binding site and alternates between an active, GTP-bound state and an inactive, GDP-bound state (PubMed:19703466, PubMed:24596087, PubMed:25037222). Signaling by an activated GPCR promotes GDP release and GTP binding (PubMed:19703466, PubMed:24596087, PubMed:25037222). The alpha subunit has a low GTPase activity that converts bound GTP to GDP, thereby terminating the signal (PubMed:21158412). Both GDP release and GTP hydrolysis are modulated by numerous regulatory proteins (PubMed:21158412). Signaling is mediated via effector proteins, such as adenylate cyclase. Inhibits adenylate cyclase activity of ADCY1, ADCY5 and ADCY6, leading to decreased intracellular cAMP levels (PubMed:19703466). The inactive GDP-bound form prevents the association of RGS14 with centrosomes and is required for the translocation of RGS14 from the cytoplasm to the plasma membrane. Required for normal cytokinesis during mitosis (PubMed:16870394). Required for cortical dynein-dynactin complex recruitment during metaphase (By similarity).</text>
</comment>
<comment type="catalytic activity">
    <reaction evidence="1">
        <text>GTP + H2O = GDP + phosphate + H(+)</text>
        <dbReference type="Rhea" id="RHEA:19669"/>
        <dbReference type="ChEBI" id="CHEBI:15377"/>
        <dbReference type="ChEBI" id="CHEBI:15378"/>
        <dbReference type="ChEBI" id="CHEBI:37565"/>
        <dbReference type="ChEBI" id="CHEBI:43474"/>
        <dbReference type="ChEBI" id="CHEBI:58189"/>
    </reaction>
    <physiologicalReaction direction="left-to-right" evidence="1">
        <dbReference type="Rhea" id="RHEA:19670"/>
    </physiologicalReaction>
</comment>
<comment type="subunit">
    <text evidence="1 3 4 5 6 7 9 10 12 14 15 16">Heterotrimeric G proteins are composed of 3 units; alpha, beta and gamma. The alpha chain contains the guanine nucleotide binding site (PubMed:24596087, PubMed:25037222, PubMed:8521505). Part of a spindle orientation complex at least composed of GNAI1, GPSM2 and NUMA1 (By similarity). Identified in complex with the beta subunit GNB1 and the gamma subunit GNG1 (PubMed:24596087). Identified in complex with the beta subunit GNB1 and the gamma subunit GNG2 (PubMed:8521505). Component of the TAS2R14-GNAI1 complex, consisting of TAS2R14, GNAI1, GNB1 and GNG2; within the complex interacts with TAS2R14; this complex plays a role in the perception of bitterness (By similarity). GTP binding causes dissociation of the heterotrimer, liberating the individual subunits so that they can interact with downstream effector proteins. Interacts (GDP-bound form) with GPSM1; this inhibits guanine nucleotide exchange and GTP binding (PubMed:11121039). Interacts (GDP-bound form) with GPSM2 (via GoLoco domains); this inhibits guanine nucleotide exchange (By similarity). Interacts with RGS10; this strongly enhances GTP hydrolysis. Interacts with RGS1 and RGS16 (By similarity). Interacts with RGS4 (PubMed:9108480). Interacts with RGS12 (PubMed:11387333). Interacts (via active GTP- or inactive GDP-bound forms) with RGS14 (via RGS and GoLoco domains) (PubMed:11387333, PubMed:16870394, PubMed:17635935, PubMed:21158412). Interacts with RGS3, RGS6, RGS7, RGS8, RGS17, RGS18 and RGS20 (in vitro) (By similarity). Interacts (GDP-bound form) with RIC8A (via C-terminus); promoting GNAI1 folding and association with the plasma membrane (PubMed:21158412, PubMed:32103024). Interacts (inactive GDP-bound form) with NUCB1 (via GBA motif); the interaction leads to activation of GNAI1 (PubMed:21653697). Interacts (inactive GDP-bound form) with CCDC88C/DAPLE (via GBA motif); the interaction leads to activation of GNAI1 (By similarity). Interacts (inactive GDP-bound form) with CCDC8A/GIV (via GBA motif) (PubMed:19211784). Interacts with GPR15 (By similarity).</text>
</comment>
<comment type="subcellular location">
    <subcellularLocation>
        <location>Nucleus</location>
    </subcellularLocation>
    <subcellularLocation>
        <location evidence="6">Cytoplasm</location>
    </subcellularLocation>
    <subcellularLocation>
        <location evidence="6 9">Cell membrane</location>
        <topology evidence="19 20">Peripheral membrane protein</topology>
        <orientation evidence="18">Cytoplasmic side</orientation>
    </subcellularLocation>
    <subcellularLocation>
        <location evidence="6">Cytoplasm</location>
        <location evidence="6">Cytoskeleton</location>
        <location evidence="6">Microtubule organizing center</location>
        <location evidence="6">Centrosome</location>
    </subcellularLocation>
    <subcellularLocation>
        <location evidence="1">Cytoplasm</location>
        <location evidence="1">Cell cortex</location>
    </subcellularLocation>
    <subcellularLocation>
        <location evidence="13">Membrane</location>
        <topology evidence="13">Lipid-anchor</topology>
    </subcellularLocation>
    <text evidence="9">Localizes in the centrosomes of interphase and mitotic cells, but not in centrosomes during cytokinesis. Detected at the cleavage furrow or the midbody. Localized at the plasma membrane throughout mitosis. Colocalizes with RIC8A and RGS14 at the plasma membrane.</text>
</comment>
<comment type="PTM">
    <text evidence="13">Myristoylation at Gly-2 is required for membrane anchoring before palmitoylation.</text>
</comment>
<comment type="PTM">
    <text evidence="13">Palmitoylation at Cys-3 varies with membrane lipid composition.</text>
</comment>
<comment type="similarity">
    <text evidence="18">Belongs to the G-alpha family. G(i/o/t/z) subfamily.</text>
</comment>
<proteinExistence type="evidence at protein level"/>
<accession>P10824</accession>
<accession>Q45QN2</accession>